<reference evidence="5" key="1">
    <citation type="journal article" date="2000" name="Genome Res.">
        <title>Sequence diversity and genomic organization of vomeronasal receptor genes in the mouse.</title>
        <authorList>
            <person name="Del Punta K."/>
            <person name="Rothman A."/>
            <person name="Rodriguez I."/>
            <person name="Mombaerts P."/>
        </authorList>
    </citation>
    <scope>NUCLEOTIDE SEQUENCE [GENOMIC DNA]</scope>
    <source>
        <strain evidence="5">129/SvJ</strain>
    </source>
</reference>
<reference evidence="6" key="2">
    <citation type="submission" date="2001-06" db="EMBL/GenBank/DDBJ databases">
        <title>Vomeronasal receptor gene diversity in the mammalian genome.</title>
        <authorList>
            <person name="Sam M."/>
            <person name="Matsunami H."/>
            <person name="Buck L."/>
        </authorList>
    </citation>
    <scope>NUCLEOTIDE SEQUENCE [GENOMIC DNA]</scope>
</reference>
<reference evidence="4" key="3">
    <citation type="journal article" date="2002" name="Nature">
        <title>Deficient pheromone responses in mice lacking a cluster of vomeronasal receptor genes.</title>
        <authorList>
            <person name="Del Punta K."/>
            <person name="Leinders-Zufall T."/>
            <person name="Rodriguez I."/>
            <person name="Jukam D."/>
            <person name="Wysocki C.J."/>
            <person name="Ogawa S."/>
            <person name="Zufall F."/>
            <person name="Mombaerts P."/>
        </authorList>
    </citation>
    <scope>PUTATIVE FUNCTION</scope>
    <scope>DISRUPTION PHENOTYPE</scope>
</reference>
<gene>
    <name type="primary">Vmn1r40</name>
    <name evidence="6" type="synonym">V1ra11</name>
    <name type="synonym">V1rb7</name>
</gene>
<sequence length="310" mass="35207">MNKANMLRTDKDMQIILFSEVSVGISANSILFIAHVCMILGENRPKPIDLYIAFLSLTQLMLLITMGLIAVDMFLSQGIWDSTTCQSLIYLHRLLRGLSLCATCLLNILWTITLSSRSFCSTKFKHKSPHHISGAFIFFCVLYMSFSSHLFISIIATHNLTSENFIYVTQSCSLLPLSYSRTSMFSAPMAIREAFLVSLMALSSGYMVALLWRHKKQAQHLHSTSLSSKASPEQRATRTILLLMSFFVVLYILENAVFYSRIKFKDGSILYCVQIILCHSYATVNPFVFICTEKHIIKFWESKCGRIVNI</sequence>
<organism>
    <name type="scientific">Mus musculus</name>
    <name type="common">Mouse</name>
    <dbReference type="NCBI Taxonomy" id="10090"/>
    <lineage>
        <taxon>Eukaryota</taxon>
        <taxon>Metazoa</taxon>
        <taxon>Chordata</taxon>
        <taxon>Craniata</taxon>
        <taxon>Vertebrata</taxon>
        <taxon>Euteleostomi</taxon>
        <taxon>Mammalia</taxon>
        <taxon>Eutheria</taxon>
        <taxon>Euarchontoglires</taxon>
        <taxon>Glires</taxon>
        <taxon>Rodentia</taxon>
        <taxon>Myomorpha</taxon>
        <taxon>Muroidea</taxon>
        <taxon>Muridae</taxon>
        <taxon>Murinae</taxon>
        <taxon>Mus</taxon>
        <taxon>Mus</taxon>
    </lineage>
</organism>
<dbReference type="EMBL" id="AF291493">
    <property type="protein sequence ID" value="AAG42087.1"/>
    <property type="molecule type" value="Genomic_DNA"/>
</dbReference>
<dbReference type="EMBL" id="AB062900">
    <property type="protein sequence ID" value="BAB79217.1"/>
    <property type="molecule type" value="Genomic_DNA"/>
</dbReference>
<dbReference type="CCDS" id="CCDS20346.1"/>
<dbReference type="RefSeq" id="NP_444458.1">
    <property type="nucleotide sequence ID" value="NM_053228.1"/>
</dbReference>
<dbReference type="RefSeq" id="XP_006505444.1">
    <property type="nucleotide sequence ID" value="XM_006505381.3"/>
</dbReference>
<dbReference type="RefSeq" id="XP_006505445.1">
    <property type="nucleotide sequence ID" value="XM_006505382.3"/>
</dbReference>
<dbReference type="SMR" id="Q9EQ46"/>
<dbReference type="STRING" id="10090.ENSMUSP00000153836"/>
<dbReference type="GlyCosmos" id="Q9EQ46">
    <property type="glycosylation" value="1 site, No reported glycans"/>
</dbReference>
<dbReference type="GlyGen" id="Q9EQ46">
    <property type="glycosylation" value="1 site"/>
</dbReference>
<dbReference type="PhosphoSitePlus" id="Q9EQ46"/>
<dbReference type="PaxDb" id="10090-ENSMUSP00000074655"/>
<dbReference type="DNASU" id="113855"/>
<dbReference type="Ensembl" id="ENSMUST00000075158.2">
    <property type="protein sequence ID" value="ENSMUSP00000074655.2"/>
    <property type="gene ID" value="ENSMUSG00000096051.3"/>
</dbReference>
<dbReference type="Ensembl" id="ENSMUST00000226925.2">
    <property type="protein sequence ID" value="ENSMUSP00000153836.2"/>
    <property type="gene ID" value="ENSMUSG00000096051.3"/>
</dbReference>
<dbReference type="Ensembl" id="ENSMUST00000228642.2">
    <property type="protein sequence ID" value="ENSMUSP00000154581.2"/>
    <property type="gene ID" value="ENSMUSG00000096051.3"/>
</dbReference>
<dbReference type="GeneID" id="113855"/>
<dbReference type="KEGG" id="mmu:113855"/>
<dbReference type="UCSC" id="uc009cwk.1">
    <property type="organism name" value="mouse"/>
</dbReference>
<dbReference type="AGR" id="MGI:2148518"/>
<dbReference type="CTD" id="113855"/>
<dbReference type="MGI" id="MGI:2148518">
    <property type="gene designation" value="Vmn1r40"/>
</dbReference>
<dbReference type="VEuPathDB" id="HostDB:ENSMUSG00000096051"/>
<dbReference type="eggNOG" id="ENOG502SNRJ">
    <property type="taxonomic scope" value="Eukaryota"/>
</dbReference>
<dbReference type="GeneTree" id="ENSGT01030000234553"/>
<dbReference type="HOGENOM" id="CLU_058641_0_0_1"/>
<dbReference type="InParanoid" id="Q9EQ46"/>
<dbReference type="OMA" id="TASHHIM"/>
<dbReference type="OrthoDB" id="9620038at2759"/>
<dbReference type="PhylomeDB" id="Q9EQ46"/>
<dbReference type="BioGRID-ORCS" id="113855">
    <property type="hits" value="2 hits in 72 CRISPR screens"/>
</dbReference>
<dbReference type="PRO" id="PR:Q9EQ46"/>
<dbReference type="Proteomes" id="UP000000589">
    <property type="component" value="Chromosome 6"/>
</dbReference>
<dbReference type="RNAct" id="Q9EQ46">
    <property type="molecule type" value="protein"/>
</dbReference>
<dbReference type="Bgee" id="ENSMUSG00000096051">
    <property type="expression patterns" value="Expressed in embryonic cell in blastocyst and 5 other cell types or tissues"/>
</dbReference>
<dbReference type="ExpressionAtlas" id="Q9EQ46">
    <property type="expression patterns" value="baseline and differential"/>
</dbReference>
<dbReference type="GO" id="GO:0005886">
    <property type="term" value="C:plasma membrane"/>
    <property type="evidence" value="ECO:0007669"/>
    <property type="project" value="UniProtKB-SubCell"/>
</dbReference>
<dbReference type="GO" id="GO:0016503">
    <property type="term" value="F:pheromone receptor activity"/>
    <property type="evidence" value="ECO:0007669"/>
    <property type="project" value="InterPro"/>
</dbReference>
<dbReference type="GO" id="GO:0019236">
    <property type="term" value="P:response to pheromone"/>
    <property type="evidence" value="ECO:0007669"/>
    <property type="project" value="UniProtKB-KW"/>
</dbReference>
<dbReference type="GO" id="GO:0007606">
    <property type="term" value="P:sensory perception of chemical stimulus"/>
    <property type="evidence" value="ECO:0000304"/>
    <property type="project" value="MGI"/>
</dbReference>
<dbReference type="CDD" id="cd13949">
    <property type="entry name" value="7tm_V1R_pheromone"/>
    <property type="match status" value="1"/>
</dbReference>
<dbReference type="FunFam" id="1.20.1070.10:FF:000051">
    <property type="entry name" value="Vomeronasal type-1 receptor"/>
    <property type="match status" value="1"/>
</dbReference>
<dbReference type="Gene3D" id="1.20.1070.10">
    <property type="entry name" value="Rhodopsin 7-helix transmembrane proteins"/>
    <property type="match status" value="1"/>
</dbReference>
<dbReference type="InterPro" id="IPR017452">
    <property type="entry name" value="GPCR_Rhodpsn_7TM"/>
</dbReference>
<dbReference type="InterPro" id="IPR004072">
    <property type="entry name" value="Vmron_rcpt_1"/>
</dbReference>
<dbReference type="PANTHER" id="PTHR24062">
    <property type="entry name" value="VOMERONASAL TYPE-1 RECEPTOR"/>
    <property type="match status" value="1"/>
</dbReference>
<dbReference type="Pfam" id="PF03402">
    <property type="entry name" value="V1R"/>
    <property type="match status" value="1"/>
</dbReference>
<dbReference type="PRINTS" id="PR01534">
    <property type="entry name" value="VOMERONASL1R"/>
</dbReference>
<dbReference type="SUPFAM" id="SSF81321">
    <property type="entry name" value="Family A G protein-coupled receptor-like"/>
    <property type="match status" value="1"/>
</dbReference>
<dbReference type="PROSITE" id="PS50262">
    <property type="entry name" value="G_PROTEIN_RECEP_F1_2"/>
    <property type="match status" value="1"/>
</dbReference>
<feature type="chain" id="PRO_0000239979" description="Vomeronasal type-1 receptor 40">
    <location>
        <begin position="1"/>
        <end position="310"/>
    </location>
</feature>
<feature type="topological domain" description="Extracellular" evidence="1">
    <location>
        <begin position="1"/>
        <end position="20"/>
    </location>
</feature>
<feature type="transmembrane region" description="Helical; Name=1" evidence="1">
    <location>
        <begin position="21"/>
        <end position="41"/>
    </location>
</feature>
<feature type="topological domain" description="Cytoplasmic" evidence="1">
    <location>
        <begin position="42"/>
        <end position="50"/>
    </location>
</feature>
<feature type="transmembrane region" description="Helical; Name=2" evidence="1">
    <location>
        <begin position="51"/>
        <end position="71"/>
    </location>
</feature>
<feature type="topological domain" description="Extracellular" evidence="1">
    <location>
        <begin position="72"/>
        <end position="93"/>
    </location>
</feature>
<feature type="transmembrane region" description="Helical; Name=3" evidence="1">
    <location>
        <begin position="94"/>
        <end position="114"/>
    </location>
</feature>
<feature type="topological domain" description="Cytoplasmic" evidence="1">
    <location>
        <begin position="115"/>
        <end position="134"/>
    </location>
</feature>
<feature type="transmembrane region" description="Helical; Name=4" evidence="1">
    <location>
        <begin position="135"/>
        <end position="155"/>
    </location>
</feature>
<feature type="topological domain" description="Extracellular" evidence="1">
    <location>
        <begin position="156"/>
        <end position="190"/>
    </location>
</feature>
<feature type="transmembrane region" description="Helical; Name=5" evidence="1">
    <location>
        <begin position="191"/>
        <end position="211"/>
    </location>
</feature>
<feature type="topological domain" description="Cytoplasmic" evidence="1">
    <location>
        <begin position="212"/>
        <end position="238"/>
    </location>
</feature>
<feature type="transmembrane region" description="Helical; Name=6" evidence="1">
    <location>
        <begin position="239"/>
        <end position="259"/>
    </location>
</feature>
<feature type="topological domain" description="Extracellular" evidence="1">
    <location>
        <begin position="260"/>
        <end position="268"/>
    </location>
</feature>
<feature type="transmembrane region" description="Helical; Name=7" evidence="1">
    <location>
        <begin position="269"/>
        <end position="289"/>
    </location>
</feature>
<feature type="topological domain" description="Cytoplasmic" evidence="1">
    <location>
        <begin position="290"/>
        <end position="310"/>
    </location>
</feature>
<feature type="glycosylation site" description="N-linked (GlcNAc...) asparagine" evidence="1">
    <location>
        <position position="159"/>
    </location>
</feature>
<feature type="disulfide bond" evidence="2">
    <location>
        <begin position="85"/>
        <end position="172"/>
    </location>
</feature>
<comment type="function">
    <text evidence="3">Putative pheromone receptor implicated in the regulation of social and reproductive behavior.</text>
</comment>
<comment type="subcellular location">
    <subcellularLocation>
        <location evidence="4">Cell membrane</location>
        <topology evidence="1">Multi-pass membrane protein</topology>
    </subcellularLocation>
</comment>
<comment type="disruption phenotype">
    <text evidence="3">Mice lacking all but one V1ra and V1rb gene (12% of the V1r repertoire) show a lack of chemosensory response to a subset of known pheromonal ligands and changes in maternal aggression as well as male reproductive behavior.</text>
</comment>
<comment type="similarity">
    <text evidence="2">Belongs to the G-protein coupled receptor 1 family.</text>
</comment>
<protein>
    <recommendedName>
        <fullName>Vomeronasal type-1 receptor 40</fullName>
    </recommendedName>
    <alternativeName>
        <fullName>Vomeronasal type-1 receptor A11</fullName>
    </alternativeName>
    <alternativeName>
        <fullName>Vomeronasal type-1 receptor B7</fullName>
    </alternativeName>
</protein>
<accession>Q9EQ46</accession>
<proteinExistence type="inferred from homology"/>
<keyword id="KW-1003">Cell membrane</keyword>
<keyword id="KW-1015">Disulfide bond</keyword>
<keyword id="KW-0297">G-protein coupled receptor</keyword>
<keyword id="KW-0325">Glycoprotein</keyword>
<keyword id="KW-0472">Membrane</keyword>
<keyword id="KW-0589">Pheromone response</keyword>
<keyword id="KW-0675">Receptor</keyword>
<keyword id="KW-1185">Reference proteome</keyword>
<keyword id="KW-0807">Transducer</keyword>
<keyword id="KW-0812">Transmembrane</keyword>
<keyword id="KW-1133">Transmembrane helix</keyword>
<evidence type="ECO:0000255" key="1"/>
<evidence type="ECO:0000255" key="2">
    <source>
        <dbReference type="PROSITE-ProRule" id="PRU00521"/>
    </source>
</evidence>
<evidence type="ECO:0000269" key="3">
    <source>
    </source>
</evidence>
<evidence type="ECO:0000305" key="4"/>
<evidence type="ECO:0000312" key="5">
    <source>
        <dbReference type="EMBL" id="AAG42087.1"/>
    </source>
</evidence>
<evidence type="ECO:0000312" key="6">
    <source>
        <dbReference type="EMBL" id="BAB79217.1"/>
    </source>
</evidence>
<name>V1R40_MOUSE</name>